<reference key="1">
    <citation type="journal article" date="2005" name="Nucleic Acids Res.">
        <title>Genome dynamics and diversity of Shigella species, the etiologic agents of bacillary dysentery.</title>
        <authorList>
            <person name="Yang F."/>
            <person name="Yang J."/>
            <person name="Zhang X."/>
            <person name="Chen L."/>
            <person name="Jiang Y."/>
            <person name="Yan Y."/>
            <person name="Tang X."/>
            <person name="Wang J."/>
            <person name="Xiong Z."/>
            <person name="Dong J."/>
            <person name="Xue Y."/>
            <person name="Zhu Y."/>
            <person name="Xu X."/>
            <person name="Sun L."/>
            <person name="Chen S."/>
            <person name="Nie H."/>
            <person name="Peng J."/>
            <person name="Xu J."/>
            <person name="Wang Y."/>
            <person name="Yuan Z."/>
            <person name="Wen Y."/>
            <person name="Yao Z."/>
            <person name="Shen Y."/>
            <person name="Qiang B."/>
            <person name="Hou Y."/>
            <person name="Yu J."/>
            <person name="Jin Q."/>
        </authorList>
    </citation>
    <scope>NUCLEOTIDE SEQUENCE [LARGE SCALE GENOMIC DNA]</scope>
    <source>
        <strain>Sd197</strain>
    </source>
</reference>
<dbReference type="EC" id="6.3.5.2" evidence="1"/>
<dbReference type="EMBL" id="CP000034">
    <property type="protein sequence ID" value="ABB62750.1"/>
    <property type="molecule type" value="Genomic_DNA"/>
</dbReference>
<dbReference type="RefSeq" id="WP_000138271.1">
    <property type="nucleotide sequence ID" value="NC_007606.1"/>
</dbReference>
<dbReference type="RefSeq" id="YP_404241.1">
    <property type="nucleotide sequence ID" value="NC_007606.1"/>
</dbReference>
<dbReference type="SMR" id="Q32D55"/>
<dbReference type="STRING" id="300267.SDY_2703"/>
<dbReference type="MEROPS" id="C26.957"/>
<dbReference type="EnsemblBacteria" id="ABB62750">
    <property type="protein sequence ID" value="ABB62750"/>
    <property type="gene ID" value="SDY_2703"/>
</dbReference>
<dbReference type="KEGG" id="sdy:SDY_2703"/>
<dbReference type="PATRIC" id="fig|300267.13.peg.3261"/>
<dbReference type="HOGENOM" id="CLU_014340_0_5_6"/>
<dbReference type="UniPathway" id="UPA00189">
    <property type="reaction ID" value="UER00296"/>
</dbReference>
<dbReference type="Proteomes" id="UP000002716">
    <property type="component" value="Chromosome"/>
</dbReference>
<dbReference type="GO" id="GO:0005829">
    <property type="term" value="C:cytosol"/>
    <property type="evidence" value="ECO:0007669"/>
    <property type="project" value="TreeGrafter"/>
</dbReference>
<dbReference type="GO" id="GO:0005524">
    <property type="term" value="F:ATP binding"/>
    <property type="evidence" value="ECO:0007669"/>
    <property type="project" value="UniProtKB-UniRule"/>
</dbReference>
<dbReference type="GO" id="GO:0003921">
    <property type="term" value="F:GMP synthase activity"/>
    <property type="evidence" value="ECO:0007669"/>
    <property type="project" value="InterPro"/>
</dbReference>
<dbReference type="CDD" id="cd01742">
    <property type="entry name" value="GATase1_GMP_Synthase"/>
    <property type="match status" value="1"/>
</dbReference>
<dbReference type="CDD" id="cd01997">
    <property type="entry name" value="GMP_synthase_C"/>
    <property type="match status" value="1"/>
</dbReference>
<dbReference type="FunFam" id="3.30.300.10:FF:000002">
    <property type="entry name" value="GMP synthase [glutamine-hydrolyzing]"/>
    <property type="match status" value="1"/>
</dbReference>
<dbReference type="FunFam" id="3.40.50.620:FF:000001">
    <property type="entry name" value="GMP synthase [glutamine-hydrolyzing]"/>
    <property type="match status" value="1"/>
</dbReference>
<dbReference type="FunFam" id="3.40.50.880:FF:000001">
    <property type="entry name" value="GMP synthase [glutamine-hydrolyzing]"/>
    <property type="match status" value="1"/>
</dbReference>
<dbReference type="Gene3D" id="3.30.300.10">
    <property type="match status" value="1"/>
</dbReference>
<dbReference type="Gene3D" id="3.40.50.880">
    <property type="match status" value="1"/>
</dbReference>
<dbReference type="Gene3D" id="3.40.50.620">
    <property type="entry name" value="HUPs"/>
    <property type="match status" value="1"/>
</dbReference>
<dbReference type="HAMAP" id="MF_00344">
    <property type="entry name" value="GMP_synthase"/>
    <property type="match status" value="1"/>
</dbReference>
<dbReference type="InterPro" id="IPR029062">
    <property type="entry name" value="Class_I_gatase-like"/>
</dbReference>
<dbReference type="InterPro" id="IPR017926">
    <property type="entry name" value="GATASE"/>
</dbReference>
<dbReference type="InterPro" id="IPR001674">
    <property type="entry name" value="GMP_synth_C"/>
</dbReference>
<dbReference type="InterPro" id="IPR004739">
    <property type="entry name" value="GMP_synth_GATase"/>
</dbReference>
<dbReference type="InterPro" id="IPR022955">
    <property type="entry name" value="GMP_synthase"/>
</dbReference>
<dbReference type="InterPro" id="IPR025777">
    <property type="entry name" value="GMPS_ATP_PPase_dom"/>
</dbReference>
<dbReference type="InterPro" id="IPR022310">
    <property type="entry name" value="NAD/GMP_synthase"/>
</dbReference>
<dbReference type="InterPro" id="IPR014729">
    <property type="entry name" value="Rossmann-like_a/b/a_fold"/>
</dbReference>
<dbReference type="NCBIfam" id="TIGR00884">
    <property type="entry name" value="guaA_Cterm"/>
    <property type="match status" value="1"/>
</dbReference>
<dbReference type="NCBIfam" id="TIGR00888">
    <property type="entry name" value="guaA_Nterm"/>
    <property type="match status" value="1"/>
</dbReference>
<dbReference type="NCBIfam" id="NF000848">
    <property type="entry name" value="PRK00074.1"/>
    <property type="match status" value="1"/>
</dbReference>
<dbReference type="PANTHER" id="PTHR11922:SF2">
    <property type="entry name" value="GMP SYNTHASE [GLUTAMINE-HYDROLYZING]"/>
    <property type="match status" value="1"/>
</dbReference>
<dbReference type="PANTHER" id="PTHR11922">
    <property type="entry name" value="GMP SYNTHASE-RELATED"/>
    <property type="match status" value="1"/>
</dbReference>
<dbReference type="Pfam" id="PF00117">
    <property type="entry name" value="GATase"/>
    <property type="match status" value="1"/>
</dbReference>
<dbReference type="Pfam" id="PF00958">
    <property type="entry name" value="GMP_synt_C"/>
    <property type="match status" value="1"/>
</dbReference>
<dbReference type="Pfam" id="PF02540">
    <property type="entry name" value="NAD_synthase"/>
    <property type="match status" value="1"/>
</dbReference>
<dbReference type="PRINTS" id="PR00097">
    <property type="entry name" value="ANTSNTHASEII"/>
</dbReference>
<dbReference type="PRINTS" id="PR00099">
    <property type="entry name" value="CPSGATASE"/>
</dbReference>
<dbReference type="PRINTS" id="PR00096">
    <property type="entry name" value="GATASE"/>
</dbReference>
<dbReference type="SUPFAM" id="SSF52402">
    <property type="entry name" value="Adenine nucleotide alpha hydrolases-like"/>
    <property type="match status" value="1"/>
</dbReference>
<dbReference type="SUPFAM" id="SSF52317">
    <property type="entry name" value="Class I glutamine amidotransferase-like"/>
    <property type="match status" value="1"/>
</dbReference>
<dbReference type="SUPFAM" id="SSF54810">
    <property type="entry name" value="GMP synthetase C-terminal dimerisation domain"/>
    <property type="match status" value="1"/>
</dbReference>
<dbReference type="PROSITE" id="PS51273">
    <property type="entry name" value="GATASE_TYPE_1"/>
    <property type="match status" value="1"/>
</dbReference>
<dbReference type="PROSITE" id="PS51553">
    <property type="entry name" value="GMPS_ATP_PPASE"/>
    <property type="match status" value="1"/>
</dbReference>
<keyword id="KW-0067">ATP-binding</keyword>
<keyword id="KW-0315">Glutamine amidotransferase</keyword>
<keyword id="KW-0332">GMP biosynthesis</keyword>
<keyword id="KW-0436">Ligase</keyword>
<keyword id="KW-0547">Nucleotide-binding</keyword>
<keyword id="KW-0658">Purine biosynthesis</keyword>
<keyword id="KW-1185">Reference proteome</keyword>
<evidence type="ECO:0000255" key="1">
    <source>
        <dbReference type="HAMAP-Rule" id="MF_00344"/>
    </source>
</evidence>
<sequence length="525" mass="58707">MTENIHKHRILILDFGSQYTQLVARRVRELGVYCELWAWDVTEAQIRDFNPSGIILSGGPESTTEENSPRAPQYVFEAGVPVFGVCYGMQTMAMQLGGHVEASNEREFGYAQVEVVNDSALVRGIEDALTADGKPLLDVWMSHGDKVTAIPSDFITVASTESCPFAIMANEEKRFYGVQFHPEVTHTRQGMRMLERFVRDICQCEALWTPAKIIDDAVARIREQVGDDKVILGLSGGVDSSVTAMLLHRAIGKNLTCVFVDNGLLRLNEAEQVLDMFGDHFGLNIVHVPAEDRFLSALAGENDPEAKRKIIGRVFVEVFDEEALKLEDVKWLAQGTIYPDVIESAASATGKAHVIKSHHNVGGLPKEMKMGLVEPLKELFKDEVRKIGLELGLPYDMLYRHPFPGPGLGVRVLGEVKKEYCDLLRRVDAIFIEELRKADLYDKVSQAFTVFLPVRSVGVMGDGRKYDWVVSLRAVETIDFMTAHWAHLPYDFLGRVSNRIINEVNGISRVVYDISGKPPATIEWE</sequence>
<protein>
    <recommendedName>
        <fullName evidence="1">GMP synthase [glutamine-hydrolyzing]</fullName>
        <ecNumber evidence="1">6.3.5.2</ecNumber>
    </recommendedName>
    <alternativeName>
        <fullName evidence="1">GMP synthetase</fullName>
    </alternativeName>
    <alternativeName>
        <fullName evidence="1">Glutamine amidotransferase</fullName>
    </alternativeName>
</protein>
<name>GUAA_SHIDS</name>
<feature type="chain" id="PRO_0000229468" description="GMP synthase [glutamine-hydrolyzing]">
    <location>
        <begin position="1"/>
        <end position="525"/>
    </location>
</feature>
<feature type="domain" description="Glutamine amidotransferase type-1" evidence="1">
    <location>
        <begin position="9"/>
        <end position="207"/>
    </location>
</feature>
<feature type="domain" description="GMPS ATP-PPase" evidence="1">
    <location>
        <begin position="208"/>
        <end position="400"/>
    </location>
</feature>
<feature type="active site" description="Nucleophile" evidence="1">
    <location>
        <position position="86"/>
    </location>
</feature>
<feature type="active site" evidence="1">
    <location>
        <position position="181"/>
    </location>
</feature>
<feature type="active site" evidence="1">
    <location>
        <position position="183"/>
    </location>
</feature>
<feature type="binding site" evidence="1">
    <location>
        <begin position="235"/>
        <end position="241"/>
    </location>
    <ligand>
        <name>ATP</name>
        <dbReference type="ChEBI" id="CHEBI:30616"/>
    </ligand>
</feature>
<accession>Q32D55</accession>
<proteinExistence type="inferred from homology"/>
<comment type="function">
    <text evidence="1">Catalyzes the synthesis of GMP from XMP.</text>
</comment>
<comment type="catalytic activity">
    <reaction evidence="1">
        <text>XMP + L-glutamine + ATP + H2O = GMP + L-glutamate + AMP + diphosphate + 2 H(+)</text>
        <dbReference type="Rhea" id="RHEA:11680"/>
        <dbReference type="ChEBI" id="CHEBI:15377"/>
        <dbReference type="ChEBI" id="CHEBI:15378"/>
        <dbReference type="ChEBI" id="CHEBI:29985"/>
        <dbReference type="ChEBI" id="CHEBI:30616"/>
        <dbReference type="ChEBI" id="CHEBI:33019"/>
        <dbReference type="ChEBI" id="CHEBI:57464"/>
        <dbReference type="ChEBI" id="CHEBI:58115"/>
        <dbReference type="ChEBI" id="CHEBI:58359"/>
        <dbReference type="ChEBI" id="CHEBI:456215"/>
        <dbReference type="EC" id="6.3.5.2"/>
    </reaction>
</comment>
<comment type="pathway">
    <text evidence="1">Purine metabolism; GMP biosynthesis; GMP from XMP (L-Gln route): step 1/1.</text>
</comment>
<comment type="subunit">
    <text evidence="1">Homodimer.</text>
</comment>
<gene>
    <name evidence="1" type="primary">guaA</name>
    <name type="ordered locus">SDY_2703</name>
</gene>
<organism>
    <name type="scientific">Shigella dysenteriae serotype 1 (strain Sd197)</name>
    <dbReference type="NCBI Taxonomy" id="300267"/>
    <lineage>
        <taxon>Bacteria</taxon>
        <taxon>Pseudomonadati</taxon>
        <taxon>Pseudomonadota</taxon>
        <taxon>Gammaproteobacteria</taxon>
        <taxon>Enterobacterales</taxon>
        <taxon>Enterobacteriaceae</taxon>
        <taxon>Shigella</taxon>
    </lineage>
</organism>